<name>YLYA_BACMT</name>
<keyword id="KW-0012">Acyltransferase</keyword>
<keyword id="KW-0808">Transferase</keyword>
<reference key="1">
    <citation type="journal article" date="1993" name="Appl. Environ. Microbiol.">
        <title>Cloning and sequence analysis of the meso-diaminopimelate decarboxylase gene from Bacillus methanolicus MGA3 and comparison to other decarboxylase genes.</title>
        <authorList>
            <person name="Mills D.A."/>
            <person name="Flickinger M.C."/>
        </authorList>
    </citation>
    <scope>NUCLEOTIDE SEQUENCE [GENOMIC DNA]</scope>
    <source>
        <strain>MGA3</strain>
    </source>
</reference>
<protein>
    <recommendedName>
        <fullName>Uncharacterized N-acetyltransferase in lysA 3'region</fullName>
        <ecNumber>2.3.1.-</ecNumber>
    </recommendedName>
    <alternativeName>
        <fullName>ORF3</fullName>
    </alternativeName>
</protein>
<organism>
    <name type="scientific">Bacillus methanolicus</name>
    <dbReference type="NCBI Taxonomy" id="1471"/>
    <lineage>
        <taxon>Bacteria</taxon>
        <taxon>Bacillati</taxon>
        <taxon>Bacillota</taxon>
        <taxon>Bacilli</taxon>
        <taxon>Bacillales</taxon>
        <taxon>Bacillaceae</taxon>
        <taxon>Bacillus</taxon>
    </lineage>
</organism>
<accession>P41024</accession>
<sequence length="120" mass="14031">MLIRYKKAFEKIAMGLLSFMPNEKDLKKLQQTMKQYETEEDRQLFLWKEEEDIIGLIGVLVVNEYEVEIHHISVNPSHRHQGIGKSMVKALRDIYPDKELIPNENTAAFIEKCEICHGSE</sequence>
<proteinExistence type="predicted"/>
<feature type="chain" id="PRO_0000066300" description="Uncharacterized N-acetyltransferase in lysA 3'region">
    <location>
        <begin position="1"/>
        <end position="120"/>
    </location>
</feature>
<feature type="domain" description="N-acetyltransferase" evidence="1">
    <location>
        <begin position="3"/>
        <end position="120"/>
    </location>
</feature>
<dbReference type="EC" id="2.3.1.-"/>
<dbReference type="EMBL" id="L18879">
    <property type="protein sequence ID" value="AAC36987.1"/>
    <property type="molecule type" value="Unassigned_DNA"/>
</dbReference>
<dbReference type="PIR" id="I39879">
    <property type="entry name" value="I39879"/>
</dbReference>
<dbReference type="RefSeq" id="WP_004435396.1">
    <property type="nucleotide sequence ID" value="NZ_CP026143.1"/>
</dbReference>
<dbReference type="SMR" id="P41024"/>
<dbReference type="GO" id="GO:0016747">
    <property type="term" value="F:acyltransferase activity, transferring groups other than amino-acyl groups"/>
    <property type="evidence" value="ECO:0007669"/>
    <property type="project" value="InterPro"/>
</dbReference>
<dbReference type="CDD" id="cd04301">
    <property type="entry name" value="NAT_SF"/>
    <property type="match status" value="1"/>
</dbReference>
<dbReference type="Gene3D" id="3.40.630.30">
    <property type="match status" value="1"/>
</dbReference>
<dbReference type="InterPro" id="IPR016181">
    <property type="entry name" value="Acyl_CoA_acyltransferase"/>
</dbReference>
<dbReference type="InterPro" id="IPR000182">
    <property type="entry name" value="GNAT_dom"/>
</dbReference>
<dbReference type="PANTHER" id="PTHR43800">
    <property type="entry name" value="PEPTIDYL-LYSINE N-ACETYLTRANSFERASE YJAB"/>
    <property type="match status" value="1"/>
</dbReference>
<dbReference type="PANTHER" id="PTHR43800:SF1">
    <property type="entry name" value="PEPTIDYL-LYSINE N-ACETYLTRANSFERASE YJAB"/>
    <property type="match status" value="1"/>
</dbReference>
<dbReference type="Pfam" id="PF00583">
    <property type="entry name" value="Acetyltransf_1"/>
    <property type="match status" value="1"/>
</dbReference>
<dbReference type="SUPFAM" id="SSF55729">
    <property type="entry name" value="Acyl-CoA N-acyltransferases (Nat)"/>
    <property type="match status" value="1"/>
</dbReference>
<dbReference type="PROSITE" id="PS51186">
    <property type="entry name" value="GNAT"/>
    <property type="match status" value="1"/>
</dbReference>
<evidence type="ECO:0000255" key="1">
    <source>
        <dbReference type="PROSITE-ProRule" id="PRU00532"/>
    </source>
</evidence>